<evidence type="ECO:0000250" key="1"/>
<evidence type="ECO:0000250" key="2">
    <source>
        <dbReference type="UniProtKB" id="Q2M3X8"/>
    </source>
</evidence>
<evidence type="ECO:0000250" key="3">
    <source>
        <dbReference type="UniProtKB" id="Q9C0D0"/>
    </source>
</evidence>
<evidence type="ECO:0000256" key="4">
    <source>
        <dbReference type="SAM" id="MobiDB-lite"/>
    </source>
</evidence>
<evidence type="ECO:0000269" key="5">
    <source>
    </source>
</evidence>
<evidence type="ECO:0000305" key="6"/>
<reference key="1">
    <citation type="journal article" date="2004" name="Proc. Natl. Acad. Sci. U.S.A.">
        <title>Phactrs 1-4: a family of protein phosphatase 1 and actin regulatory proteins.</title>
        <authorList>
            <person name="Allen P.B."/>
            <person name="Greenfield A.T."/>
            <person name="Svenningsson P."/>
            <person name="Haspeslagh D.C."/>
            <person name="Greengard P."/>
        </authorList>
    </citation>
    <scope>NUCLEOTIDE SEQUENCE [MRNA]</scope>
    <scope>INTERACTION WITH PPP1CA AND ACTIN</scope>
    <scope>SUBCELLULAR LOCATION</scope>
    <scope>TISSUE SPECIFICITY</scope>
    <scope>MUTAGENESIS OF ARG-576; PHE-577; HIS-578; ARG-579 AND PRO-580</scope>
    <source>
        <strain>Sprague-Dawley</strain>
        <tissue>Hippocampus</tissue>
    </source>
</reference>
<reference key="2">
    <citation type="journal article" date="2004" name="Genome Res.">
        <title>The status, quality, and expansion of the NIH full-length cDNA project: the Mammalian Gene Collection (MGC).</title>
        <authorList>
            <consortium name="The MGC Project Team"/>
        </authorList>
    </citation>
    <scope>NUCLEOTIDE SEQUENCE [LARGE SCALE MRNA]</scope>
    <source>
        <tissue>Brain</tissue>
    </source>
</reference>
<gene>
    <name type="primary">Phactr1</name>
</gene>
<proteinExistence type="evidence at protein level"/>
<organism>
    <name type="scientific">Rattus norvegicus</name>
    <name type="common">Rat</name>
    <dbReference type="NCBI Taxonomy" id="10116"/>
    <lineage>
        <taxon>Eukaryota</taxon>
        <taxon>Metazoa</taxon>
        <taxon>Chordata</taxon>
        <taxon>Craniata</taxon>
        <taxon>Vertebrata</taxon>
        <taxon>Euteleostomi</taxon>
        <taxon>Mammalia</taxon>
        <taxon>Eutheria</taxon>
        <taxon>Euarchontoglires</taxon>
        <taxon>Glires</taxon>
        <taxon>Rodentia</taxon>
        <taxon>Myomorpha</taxon>
        <taxon>Muroidea</taxon>
        <taxon>Muridae</taxon>
        <taxon>Murinae</taxon>
        <taxon>Rattus</taxon>
    </lineage>
</organism>
<comment type="function">
    <text evidence="2">Binds actin monomers (G actin) and plays a role in multiple processes including the regulation of actin cytoskeleton dynamics, actin stress fibers formation, cell motility and survival, formation of tubules by endothelial cells, and regulation of PPP1CA activity (By similarity). Involved in the regulation of cortical neuron migration and dendrite arborization (By similarity).</text>
</comment>
<comment type="subunit">
    <text evidence="5">Interacts (via RPEL repeats) with ACTA1 and PPP1CA; ACTA1 and PPP1CA compete for the same binding site.</text>
</comment>
<comment type="subcellular location">
    <subcellularLocation>
        <location evidence="5">Cytoplasm</location>
    </subcellularLocation>
    <subcellularLocation>
        <location evidence="5">Synapse</location>
    </subcellularLocation>
    <subcellularLocation>
        <location evidence="1">Nucleus</location>
    </subcellularLocation>
    <text evidence="1">Cytoplasmic in resting cells, and is imported into the nucleus upon serum stimulation. Interaction with actin prevents nuclear import (By similarity). Enriched at synapses.</text>
</comment>
<comment type="tissue specificity">
    <text evidence="5">Selectively expressed in brain. High levels are found in the olfactory tubercle, nucleus accumbens core and shell, caudate-putamen, cerebral cortex, hippocampus and piriform cortex. Moderate to high levels in the olfactory bulb, arcuate and ventromedial hypothalamus, subthalamic nucleus, amygdala, lateral septum, habenula and thalamus. Low expression, if any, in substantia nigra pars compacta/pars reticula and globus pallidus (at protein level).</text>
</comment>
<comment type="domain">
    <text evidence="1">Binds three actin monomers via the three C-terminal RPEL repeats.</text>
</comment>
<comment type="similarity">
    <text evidence="6">Belongs to the phosphatase and actin regulator family.</text>
</comment>
<name>PHAR1_RAT</name>
<feature type="chain" id="PRO_0000126635" description="Phosphatase and actin regulator 1">
    <location>
        <begin position="1"/>
        <end position="580"/>
    </location>
</feature>
<feature type="repeat" description="RPEL 1">
    <location>
        <begin position="138"/>
        <end position="163"/>
    </location>
</feature>
<feature type="repeat" description="RPEL 2">
    <location>
        <begin position="422"/>
        <end position="447"/>
    </location>
</feature>
<feature type="repeat" description="RPEL 3">
    <location>
        <begin position="460"/>
        <end position="485"/>
    </location>
</feature>
<feature type="repeat" description="RPEL 4">
    <location>
        <begin position="498"/>
        <end position="523"/>
    </location>
</feature>
<feature type="region of interest" description="Disordered" evidence="4">
    <location>
        <begin position="331"/>
        <end position="351"/>
    </location>
</feature>
<feature type="region of interest" description="Disordered" evidence="4">
    <location>
        <begin position="462"/>
        <end position="494"/>
    </location>
</feature>
<feature type="short sequence motif" description="Nuclear localization signal" evidence="1">
    <location>
        <begin position="108"/>
        <end position="129"/>
    </location>
</feature>
<feature type="compositionally biased region" description="Low complexity" evidence="4">
    <location>
        <begin position="337"/>
        <end position="348"/>
    </location>
</feature>
<feature type="compositionally biased region" description="Basic and acidic residues" evidence="4">
    <location>
        <begin position="471"/>
        <end position="494"/>
    </location>
</feature>
<feature type="modified residue" description="Phosphoserine" evidence="2">
    <location>
        <position position="67"/>
    </location>
</feature>
<feature type="modified residue" description="Phosphoserine" evidence="2">
    <location>
        <position position="78"/>
    </location>
</feature>
<feature type="modified residue" description="Phosphothreonine" evidence="2">
    <location>
        <position position="104"/>
    </location>
</feature>
<feature type="modified residue" description="Phosphoserine" evidence="3">
    <location>
        <position position="467"/>
    </location>
</feature>
<feature type="modified residue" description="Phosphoserine" evidence="3">
    <location>
        <position position="505"/>
    </location>
</feature>
<feature type="mutagenesis site" description="No effect on PPP1CA-binding." evidence="5">
    <original>R</original>
    <variation>A</variation>
    <location>
        <position position="576"/>
    </location>
</feature>
<feature type="mutagenesis site" description="Strongly reduces PPP1CA-binding." evidence="5">
    <original>F</original>
    <variation>A</variation>
    <location>
        <position position="577"/>
    </location>
</feature>
<feature type="mutagenesis site" description="Reduces PPP1CA-binding." evidence="5">
    <original>H</original>
    <variation>A</variation>
    <location>
        <position position="578"/>
    </location>
</feature>
<feature type="mutagenesis site" description="No effect on PPP1CA-binding." evidence="5">
    <original>R</original>
    <variation>A</variation>
    <location>
        <position position="579"/>
    </location>
</feature>
<feature type="mutagenesis site" description="No effect on PPP1CA-binding." evidence="5">
    <original>P</original>
    <variation>A</variation>
    <location>
        <position position="580"/>
    </location>
</feature>
<feature type="sequence conflict" description="In Ref. 2; AAH98634." evidence="6" ref="2">
    <original>A</original>
    <variation>T</variation>
    <location>
        <position position="262"/>
    </location>
</feature>
<sequence>MDYPKMDYFLDVESAHRLLDVESAQRFFYSQGAQARRATLLLPPTLMAASSEDDIDRRPIRRVRSKSDTPYLAEARISFNLGAAEEVERLAAMRSDSLVPGTHTPPIRRRSKFANLGRIFKPWKWRKKKSEKFKHTSAALERKISMRQSREELIKRGVLKEIYDKDGELSISNEDDSLTNGQSLSSSQLSLPALSEMEPVPMPRDPCSYEVLQASDIMDGPDPGAPVKLPCLPVKLSPPLPPKKVLICMPVGGPELSLASYAAQKSSQQAVAQHHHTVLPSQMQHQLQYGSHGQHLPSSTGTLPMHPSGCRMIDELNKTLAMTMQRLESSEQRVPCSTSYHSSGLHSSDGVTKAGPLGLPEIRQVPTVVIECDDNKENVPHEPDYEDSSCLYAREEEEEEEDEDDDASLYTSSLAMKVCRKDSLAIKLSNRPSKRELEEKNILPRQTDEERLELRQQIGTKLTRRLSQRPTAEELEQRNILKPRNEQEEQEEKREIKRRLTRKLSQRPTVEELRERKILIRFSDYVEVADAQDYDRRADKPWTRLTAADKAAIRKELNEFKSTEMEVHELSRHLTRFHRP</sequence>
<dbReference type="EMBL" id="AY494977">
    <property type="protein sequence ID" value="AAS77487.1"/>
    <property type="molecule type" value="mRNA"/>
</dbReference>
<dbReference type="EMBL" id="BC098634">
    <property type="protein sequence ID" value="AAH98634.1"/>
    <property type="molecule type" value="mRNA"/>
</dbReference>
<dbReference type="RefSeq" id="NP_999622.2">
    <property type="nucleotide sequence ID" value="NM_214457.2"/>
</dbReference>
<dbReference type="SMR" id="P62024"/>
<dbReference type="BioGRID" id="258561">
    <property type="interactions" value="1"/>
</dbReference>
<dbReference type="ELM" id="P62024"/>
<dbReference type="FunCoup" id="P62024">
    <property type="interactions" value="1886"/>
</dbReference>
<dbReference type="STRING" id="10116.ENSRNOP00000043053"/>
<dbReference type="iPTMnet" id="P62024"/>
<dbReference type="PhosphoSitePlus" id="P62024"/>
<dbReference type="PaxDb" id="10116-ENSRNOP00000043053"/>
<dbReference type="GeneID" id="306844"/>
<dbReference type="KEGG" id="rno:306844"/>
<dbReference type="UCSC" id="RGD:1303187">
    <property type="organism name" value="rat"/>
</dbReference>
<dbReference type="AGR" id="RGD:1303187"/>
<dbReference type="CTD" id="221692"/>
<dbReference type="RGD" id="1303187">
    <property type="gene designation" value="Phactr1"/>
</dbReference>
<dbReference type="eggNOG" id="KOG4339">
    <property type="taxonomic scope" value="Eukaryota"/>
</dbReference>
<dbReference type="InParanoid" id="P62024"/>
<dbReference type="PhylomeDB" id="P62024"/>
<dbReference type="PRO" id="PR:P62024"/>
<dbReference type="Proteomes" id="UP000002494">
    <property type="component" value="Unplaced"/>
</dbReference>
<dbReference type="GO" id="GO:0005737">
    <property type="term" value="C:cytoplasm"/>
    <property type="evidence" value="ECO:0000314"/>
    <property type="project" value="RGD"/>
</dbReference>
<dbReference type="GO" id="GO:0005829">
    <property type="term" value="C:cytosol"/>
    <property type="evidence" value="ECO:0000250"/>
    <property type="project" value="UniProtKB"/>
</dbReference>
<dbReference type="GO" id="GO:0098978">
    <property type="term" value="C:glutamatergic synapse"/>
    <property type="evidence" value="ECO:0000314"/>
    <property type="project" value="SynGO"/>
</dbReference>
<dbReference type="GO" id="GO:0005634">
    <property type="term" value="C:nucleus"/>
    <property type="evidence" value="ECO:0000314"/>
    <property type="project" value="RGD"/>
</dbReference>
<dbReference type="GO" id="GO:0098794">
    <property type="term" value="C:postsynapse"/>
    <property type="evidence" value="ECO:0000314"/>
    <property type="project" value="SynGO"/>
</dbReference>
<dbReference type="GO" id="GO:0003779">
    <property type="term" value="F:actin binding"/>
    <property type="evidence" value="ECO:0000250"/>
    <property type="project" value="UniProtKB"/>
</dbReference>
<dbReference type="GO" id="GO:0008157">
    <property type="term" value="F:protein phosphatase 1 binding"/>
    <property type="evidence" value="ECO:0000314"/>
    <property type="project" value="RGD"/>
</dbReference>
<dbReference type="GO" id="GO:0004864">
    <property type="term" value="F:protein phosphatase inhibitor activity"/>
    <property type="evidence" value="ECO:0007669"/>
    <property type="project" value="UniProtKB-KW"/>
</dbReference>
<dbReference type="GO" id="GO:0030036">
    <property type="term" value="P:actin cytoskeleton organization"/>
    <property type="evidence" value="ECO:0000250"/>
    <property type="project" value="UniProtKB"/>
</dbReference>
<dbReference type="GO" id="GO:0031032">
    <property type="term" value="P:actomyosin structure organization"/>
    <property type="evidence" value="ECO:0000250"/>
    <property type="project" value="UniProtKB"/>
</dbReference>
<dbReference type="GO" id="GO:0048870">
    <property type="term" value="P:cell motility"/>
    <property type="evidence" value="ECO:0000266"/>
    <property type="project" value="RGD"/>
</dbReference>
<dbReference type="GO" id="GO:0071260">
    <property type="term" value="P:cellular response to mechanical stimulus"/>
    <property type="evidence" value="ECO:0000270"/>
    <property type="project" value="RGD"/>
</dbReference>
<dbReference type="GO" id="GO:0021987">
    <property type="term" value="P:cerebral cortex development"/>
    <property type="evidence" value="ECO:0000250"/>
    <property type="project" value="UniProtKB"/>
</dbReference>
<dbReference type="GO" id="GO:0140059">
    <property type="term" value="P:dendrite arborization"/>
    <property type="evidence" value="ECO:0000250"/>
    <property type="project" value="UniProtKB"/>
</dbReference>
<dbReference type="GO" id="GO:0010628">
    <property type="term" value="P:positive regulation of gene expression"/>
    <property type="evidence" value="ECO:0000315"/>
    <property type="project" value="RGD"/>
</dbReference>
<dbReference type="GO" id="GO:0099159">
    <property type="term" value="P:regulation of modification of postsynaptic structure"/>
    <property type="evidence" value="ECO:0000314"/>
    <property type="project" value="SynGO"/>
</dbReference>
<dbReference type="GO" id="GO:2001222">
    <property type="term" value="P:regulation of neuron migration"/>
    <property type="evidence" value="ECO:0000250"/>
    <property type="project" value="UniProtKB"/>
</dbReference>
<dbReference type="GO" id="GO:0043149">
    <property type="term" value="P:stress fiber assembly"/>
    <property type="evidence" value="ECO:0000250"/>
    <property type="project" value="UniProtKB"/>
</dbReference>
<dbReference type="Gene3D" id="6.10.140.1750">
    <property type="match status" value="1"/>
</dbReference>
<dbReference type="Gene3D" id="6.10.140.2130">
    <property type="match status" value="1"/>
</dbReference>
<dbReference type="InterPro" id="IPR004018">
    <property type="entry name" value="RPEL_repeat"/>
</dbReference>
<dbReference type="PANTHER" id="PTHR12751:SF6">
    <property type="entry name" value="PHOSPHATASE AND ACTIN REGULATOR 1"/>
    <property type="match status" value="1"/>
</dbReference>
<dbReference type="PANTHER" id="PTHR12751">
    <property type="entry name" value="PHOSPHATASE AND ACTIN REGULATOR PHACTR"/>
    <property type="match status" value="1"/>
</dbReference>
<dbReference type="Pfam" id="PF02755">
    <property type="entry name" value="RPEL"/>
    <property type="match status" value="4"/>
</dbReference>
<dbReference type="SMART" id="SM00707">
    <property type="entry name" value="RPEL"/>
    <property type="match status" value="4"/>
</dbReference>
<dbReference type="PROSITE" id="PS51073">
    <property type="entry name" value="RPEL"/>
    <property type="match status" value="4"/>
</dbReference>
<keyword id="KW-0009">Actin-binding</keyword>
<keyword id="KW-0963">Cytoplasm</keyword>
<keyword id="KW-0539">Nucleus</keyword>
<keyword id="KW-0597">Phosphoprotein</keyword>
<keyword id="KW-0650">Protein phosphatase inhibitor</keyword>
<keyword id="KW-1185">Reference proteome</keyword>
<keyword id="KW-0677">Repeat</keyword>
<keyword id="KW-0770">Synapse</keyword>
<accession>P62024</accession>
<accession>Q4KMC2</accession>
<protein>
    <recommendedName>
        <fullName>Phosphatase and actin regulator 1</fullName>
    </recommendedName>
</protein>